<reference key="1">
    <citation type="submission" date="2007-08" db="EMBL/GenBank/DDBJ databases">
        <authorList>
            <consortium name="The Vibrio harveyi Genome Sequencing Project"/>
            <person name="Bassler B."/>
            <person name="Clifton S.W."/>
            <person name="Fulton L."/>
            <person name="Delehaunty K."/>
            <person name="Fronick C."/>
            <person name="Harrison M."/>
            <person name="Markivic C."/>
            <person name="Fulton R."/>
            <person name="Tin-Wollam A.-M."/>
            <person name="Shah N."/>
            <person name="Pepin K."/>
            <person name="Nash W."/>
            <person name="Thiruvilangam P."/>
            <person name="Bhonagiri V."/>
            <person name="Waters C."/>
            <person name="Tu K.C."/>
            <person name="Irgon J."/>
            <person name="Wilson R.K."/>
        </authorList>
    </citation>
    <scope>NUCLEOTIDE SEQUENCE [LARGE SCALE GENOMIC DNA]</scope>
    <source>
        <strain>ATCC BAA-1116 / BB120</strain>
    </source>
</reference>
<keyword id="KW-0687">Ribonucleoprotein</keyword>
<keyword id="KW-0689">Ribosomal protein</keyword>
<proteinExistence type="inferred from homology"/>
<dbReference type="EMBL" id="CP000789">
    <property type="protein sequence ID" value="ABU69730.1"/>
    <property type="molecule type" value="Genomic_DNA"/>
</dbReference>
<dbReference type="RefSeq" id="WP_004410492.1">
    <property type="nucleotide sequence ID" value="NC_022269.1"/>
</dbReference>
<dbReference type="SMR" id="A7MWI2"/>
<dbReference type="GeneID" id="97171180"/>
<dbReference type="KEGG" id="vha:VIBHAR_00729"/>
<dbReference type="PATRIC" id="fig|338187.25.peg.1885"/>
<dbReference type="Proteomes" id="UP000008152">
    <property type="component" value="Chromosome I"/>
</dbReference>
<dbReference type="GO" id="GO:1990904">
    <property type="term" value="C:ribonucleoprotein complex"/>
    <property type="evidence" value="ECO:0007669"/>
    <property type="project" value="UniProtKB-KW"/>
</dbReference>
<dbReference type="GO" id="GO:0005840">
    <property type="term" value="C:ribosome"/>
    <property type="evidence" value="ECO:0007669"/>
    <property type="project" value="UniProtKB-KW"/>
</dbReference>
<dbReference type="GO" id="GO:0003735">
    <property type="term" value="F:structural constituent of ribosome"/>
    <property type="evidence" value="ECO:0007669"/>
    <property type="project" value="InterPro"/>
</dbReference>
<dbReference type="GO" id="GO:0000049">
    <property type="term" value="F:tRNA binding"/>
    <property type="evidence" value="ECO:0007669"/>
    <property type="project" value="UniProtKB-UniRule"/>
</dbReference>
<dbReference type="GO" id="GO:0006412">
    <property type="term" value="P:translation"/>
    <property type="evidence" value="ECO:0007669"/>
    <property type="project" value="UniProtKB-UniRule"/>
</dbReference>
<dbReference type="FunFam" id="3.30.70.600:FF:000001">
    <property type="entry name" value="30S ribosomal protein S10"/>
    <property type="match status" value="1"/>
</dbReference>
<dbReference type="Gene3D" id="3.30.70.600">
    <property type="entry name" value="Ribosomal protein S10 domain"/>
    <property type="match status" value="1"/>
</dbReference>
<dbReference type="HAMAP" id="MF_00508">
    <property type="entry name" value="Ribosomal_uS10"/>
    <property type="match status" value="1"/>
</dbReference>
<dbReference type="InterPro" id="IPR001848">
    <property type="entry name" value="Ribosomal_uS10"/>
</dbReference>
<dbReference type="InterPro" id="IPR018268">
    <property type="entry name" value="Ribosomal_uS10_CS"/>
</dbReference>
<dbReference type="InterPro" id="IPR027486">
    <property type="entry name" value="Ribosomal_uS10_dom"/>
</dbReference>
<dbReference type="InterPro" id="IPR036838">
    <property type="entry name" value="Ribosomal_uS10_dom_sf"/>
</dbReference>
<dbReference type="NCBIfam" id="NF001861">
    <property type="entry name" value="PRK00596.1"/>
    <property type="match status" value="1"/>
</dbReference>
<dbReference type="NCBIfam" id="TIGR01049">
    <property type="entry name" value="rpsJ_bact"/>
    <property type="match status" value="1"/>
</dbReference>
<dbReference type="PANTHER" id="PTHR11700">
    <property type="entry name" value="30S RIBOSOMAL PROTEIN S10 FAMILY MEMBER"/>
    <property type="match status" value="1"/>
</dbReference>
<dbReference type="Pfam" id="PF00338">
    <property type="entry name" value="Ribosomal_S10"/>
    <property type="match status" value="1"/>
</dbReference>
<dbReference type="PRINTS" id="PR00971">
    <property type="entry name" value="RIBOSOMALS10"/>
</dbReference>
<dbReference type="SMART" id="SM01403">
    <property type="entry name" value="Ribosomal_S10"/>
    <property type="match status" value="1"/>
</dbReference>
<dbReference type="SUPFAM" id="SSF54999">
    <property type="entry name" value="Ribosomal protein S10"/>
    <property type="match status" value="1"/>
</dbReference>
<dbReference type="PROSITE" id="PS00361">
    <property type="entry name" value="RIBOSOMAL_S10"/>
    <property type="match status" value="1"/>
</dbReference>
<sequence length="103" mass="11721">MQNQRIRIRLKAFDYKLIDASTAEIVETAKRTGAQVRGPIPLPTRKERFTVLISPHVNKKARDQYEIRTHKRLIDIVEPTDKTVDALMRLDLAAGVDVQISLG</sequence>
<comment type="function">
    <text evidence="1">Involved in the binding of tRNA to the ribosomes.</text>
</comment>
<comment type="subunit">
    <text evidence="1">Part of the 30S ribosomal subunit.</text>
</comment>
<comment type="similarity">
    <text evidence="1">Belongs to the universal ribosomal protein uS10 family.</text>
</comment>
<name>RS10_VIBC1</name>
<evidence type="ECO:0000255" key="1">
    <source>
        <dbReference type="HAMAP-Rule" id="MF_00508"/>
    </source>
</evidence>
<evidence type="ECO:0000305" key="2"/>
<protein>
    <recommendedName>
        <fullName evidence="1">Small ribosomal subunit protein uS10</fullName>
    </recommendedName>
    <alternativeName>
        <fullName evidence="2">30S ribosomal protein S10</fullName>
    </alternativeName>
</protein>
<feature type="chain" id="PRO_1000015135" description="Small ribosomal subunit protein uS10">
    <location>
        <begin position="1"/>
        <end position="103"/>
    </location>
</feature>
<gene>
    <name evidence="1" type="primary">rpsJ</name>
    <name type="ordered locus">VIBHAR_00729</name>
</gene>
<organism>
    <name type="scientific">Vibrio campbellii (strain ATCC BAA-1116)</name>
    <dbReference type="NCBI Taxonomy" id="2902295"/>
    <lineage>
        <taxon>Bacteria</taxon>
        <taxon>Pseudomonadati</taxon>
        <taxon>Pseudomonadota</taxon>
        <taxon>Gammaproteobacteria</taxon>
        <taxon>Vibrionales</taxon>
        <taxon>Vibrionaceae</taxon>
        <taxon>Vibrio</taxon>
    </lineage>
</organism>
<accession>A7MWI2</accession>